<keyword id="KW-0067">ATP-binding</keyword>
<keyword id="KW-0418">Kinase</keyword>
<keyword id="KW-0460">Magnesium</keyword>
<keyword id="KW-0479">Metal-binding</keyword>
<keyword id="KW-0511">Multifunctional enzyme</keyword>
<keyword id="KW-0547">Nucleotide-binding</keyword>
<keyword id="KW-0723">Serine/threonine-protein kinase</keyword>
<keyword id="KW-0808">Transferase</keyword>
<feature type="chain" id="PRO_1000139921" description="HPr kinase/phosphorylase">
    <location>
        <begin position="1"/>
        <end position="316"/>
    </location>
</feature>
<feature type="region of interest" description="Important for the catalytic mechanism of both phosphorylation and dephosphorylation" evidence="1">
    <location>
        <begin position="206"/>
        <end position="215"/>
    </location>
</feature>
<feature type="region of interest" description="Important for the catalytic mechanism of dephosphorylation" evidence="1">
    <location>
        <begin position="272"/>
        <end position="277"/>
    </location>
</feature>
<feature type="active site" evidence="1">
    <location>
        <position position="143"/>
    </location>
</feature>
<feature type="active site" evidence="1">
    <location>
        <position position="164"/>
    </location>
</feature>
<feature type="active site" description="Proton acceptor; for phosphorylation activity. Proton donor; for dephosphorylation activity" evidence="1">
    <location>
        <position position="182"/>
    </location>
</feature>
<feature type="active site" evidence="1">
    <location>
        <position position="251"/>
    </location>
</feature>
<feature type="binding site" evidence="1">
    <location>
        <begin position="158"/>
        <end position="165"/>
    </location>
    <ligand>
        <name>ATP</name>
        <dbReference type="ChEBI" id="CHEBI:30616"/>
    </ligand>
</feature>
<feature type="binding site" evidence="1">
    <location>
        <position position="165"/>
    </location>
    <ligand>
        <name>Mg(2+)</name>
        <dbReference type="ChEBI" id="CHEBI:18420"/>
    </ligand>
</feature>
<feature type="binding site" evidence="1">
    <location>
        <position position="207"/>
    </location>
    <ligand>
        <name>Mg(2+)</name>
        <dbReference type="ChEBI" id="CHEBI:18420"/>
    </ligand>
</feature>
<comment type="function">
    <text evidence="1">Catalyzes the ATP- as well as the pyrophosphate-dependent phosphorylation of a specific serine residue in HPr, a phosphocarrier protein of the phosphoenolpyruvate-dependent sugar phosphotransferase system (PTS). HprK/P also catalyzes the pyrophosphate-producing, inorganic phosphate-dependent dephosphorylation (phosphorolysis) of seryl-phosphorylated HPr (P-Ser-HPr).</text>
</comment>
<comment type="catalytic activity">
    <reaction evidence="1">
        <text>[HPr protein]-L-serine + ATP = [HPr protein]-O-phospho-L-serine + ADP + H(+)</text>
        <dbReference type="Rhea" id="RHEA:46600"/>
        <dbReference type="Rhea" id="RHEA-COMP:11602"/>
        <dbReference type="Rhea" id="RHEA-COMP:11603"/>
        <dbReference type="ChEBI" id="CHEBI:15378"/>
        <dbReference type="ChEBI" id="CHEBI:29999"/>
        <dbReference type="ChEBI" id="CHEBI:30616"/>
        <dbReference type="ChEBI" id="CHEBI:83421"/>
        <dbReference type="ChEBI" id="CHEBI:456216"/>
    </reaction>
</comment>
<comment type="catalytic activity">
    <reaction evidence="1">
        <text>[HPr protein]-O-phospho-L-serine + phosphate + H(+) = [HPr protein]-L-serine + diphosphate</text>
        <dbReference type="Rhea" id="RHEA:46604"/>
        <dbReference type="Rhea" id="RHEA-COMP:11602"/>
        <dbReference type="Rhea" id="RHEA-COMP:11603"/>
        <dbReference type="ChEBI" id="CHEBI:15378"/>
        <dbReference type="ChEBI" id="CHEBI:29999"/>
        <dbReference type="ChEBI" id="CHEBI:33019"/>
        <dbReference type="ChEBI" id="CHEBI:43474"/>
        <dbReference type="ChEBI" id="CHEBI:83421"/>
    </reaction>
</comment>
<comment type="cofactor">
    <cofactor evidence="1">
        <name>Mg(2+)</name>
        <dbReference type="ChEBI" id="CHEBI:18420"/>
    </cofactor>
</comment>
<comment type="subunit">
    <text evidence="1">Homohexamer.</text>
</comment>
<comment type="domain">
    <text evidence="1">The Walker A ATP-binding motif also binds Pi and PPi.</text>
</comment>
<comment type="miscellaneous">
    <text evidence="1">Both phosphorylation and phosphorolysis are carried out by the same active site and suggest a common mechanism for both reactions.</text>
</comment>
<comment type="similarity">
    <text evidence="1">Belongs to the HPrK/P family.</text>
</comment>
<dbReference type="EC" id="2.7.11.-" evidence="1"/>
<dbReference type="EC" id="2.7.4.-" evidence="1"/>
<dbReference type="EMBL" id="CP000941">
    <property type="protein sequence ID" value="ACA11745.1"/>
    <property type="molecule type" value="Genomic_DNA"/>
</dbReference>
<dbReference type="RefSeq" id="WP_004083779.1">
    <property type="nucleotide sequence ID" value="NC_010513.1"/>
</dbReference>
<dbReference type="SMR" id="B0U6M9"/>
<dbReference type="KEGG" id="xfm:Xfasm12_0754"/>
<dbReference type="HOGENOM" id="CLU_052030_0_2_6"/>
<dbReference type="GO" id="GO:0005524">
    <property type="term" value="F:ATP binding"/>
    <property type="evidence" value="ECO:0007669"/>
    <property type="project" value="UniProtKB-UniRule"/>
</dbReference>
<dbReference type="GO" id="GO:0000287">
    <property type="term" value="F:magnesium ion binding"/>
    <property type="evidence" value="ECO:0007669"/>
    <property type="project" value="UniProtKB-UniRule"/>
</dbReference>
<dbReference type="GO" id="GO:0000155">
    <property type="term" value="F:phosphorelay sensor kinase activity"/>
    <property type="evidence" value="ECO:0007669"/>
    <property type="project" value="InterPro"/>
</dbReference>
<dbReference type="GO" id="GO:0004674">
    <property type="term" value="F:protein serine/threonine kinase activity"/>
    <property type="evidence" value="ECO:0007669"/>
    <property type="project" value="UniProtKB-KW"/>
</dbReference>
<dbReference type="GO" id="GO:0004712">
    <property type="term" value="F:protein serine/threonine/tyrosine kinase activity"/>
    <property type="evidence" value="ECO:0007669"/>
    <property type="project" value="UniProtKB-UniRule"/>
</dbReference>
<dbReference type="GO" id="GO:0006109">
    <property type="term" value="P:regulation of carbohydrate metabolic process"/>
    <property type="evidence" value="ECO:0007669"/>
    <property type="project" value="UniProtKB-UniRule"/>
</dbReference>
<dbReference type="CDD" id="cd01918">
    <property type="entry name" value="HprK_C"/>
    <property type="match status" value="1"/>
</dbReference>
<dbReference type="FunFam" id="3.40.50.300:FF:000174">
    <property type="entry name" value="HPr kinase/phosphorylase"/>
    <property type="match status" value="1"/>
</dbReference>
<dbReference type="Gene3D" id="3.40.1390.20">
    <property type="entry name" value="HprK N-terminal domain-like"/>
    <property type="match status" value="1"/>
</dbReference>
<dbReference type="Gene3D" id="3.40.50.300">
    <property type="entry name" value="P-loop containing nucleotide triphosphate hydrolases"/>
    <property type="match status" value="1"/>
</dbReference>
<dbReference type="HAMAP" id="MF_01249">
    <property type="entry name" value="HPr_kinase"/>
    <property type="match status" value="1"/>
</dbReference>
<dbReference type="InterPro" id="IPR003755">
    <property type="entry name" value="HPr(Ser)_kin/Pase"/>
</dbReference>
<dbReference type="InterPro" id="IPR011104">
    <property type="entry name" value="Hpr_kin/Pase_C"/>
</dbReference>
<dbReference type="InterPro" id="IPR011126">
    <property type="entry name" value="Hpr_kin/Pase_Hpr_N"/>
</dbReference>
<dbReference type="InterPro" id="IPR027417">
    <property type="entry name" value="P-loop_NTPase"/>
</dbReference>
<dbReference type="InterPro" id="IPR028979">
    <property type="entry name" value="Ser_kin/Pase_Hpr-like_N_sf"/>
</dbReference>
<dbReference type="NCBIfam" id="TIGR00679">
    <property type="entry name" value="hpr-ser"/>
    <property type="match status" value="1"/>
</dbReference>
<dbReference type="PANTHER" id="PTHR30305:SF1">
    <property type="entry name" value="HPR KINASE_PHOSPHORYLASE"/>
    <property type="match status" value="1"/>
</dbReference>
<dbReference type="PANTHER" id="PTHR30305">
    <property type="entry name" value="PROTEIN YJDM-RELATED"/>
    <property type="match status" value="1"/>
</dbReference>
<dbReference type="Pfam" id="PF07475">
    <property type="entry name" value="Hpr_kinase_C"/>
    <property type="match status" value="1"/>
</dbReference>
<dbReference type="Pfam" id="PF02603">
    <property type="entry name" value="Hpr_kinase_N"/>
    <property type="match status" value="1"/>
</dbReference>
<dbReference type="SUPFAM" id="SSF75138">
    <property type="entry name" value="HprK N-terminal domain-like"/>
    <property type="match status" value="1"/>
</dbReference>
<dbReference type="SUPFAM" id="SSF53795">
    <property type="entry name" value="PEP carboxykinase-like"/>
    <property type="match status" value="1"/>
</dbReference>
<protein>
    <recommendedName>
        <fullName evidence="1">HPr kinase/phosphorylase</fullName>
        <shortName evidence="1">HPrK/P</shortName>
        <ecNumber evidence="1">2.7.11.-</ecNumber>
        <ecNumber evidence="1">2.7.4.-</ecNumber>
    </recommendedName>
    <alternativeName>
        <fullName evidence="1">HPr(Ser) kinase/phosphorylase</fullName>
    </alternativeName>
</protein>
<accession>B0U6M9</accession>
<sequence>MNTSITARELFDLQRDRLSLRWIAGQQGEHRQIDSGDTRARRPSLAGYLNTIYPNKVQILGTEELTWLDSLEPNKRKETIEKIIQFQPLTLVISKNQSCPEDMRTAADNSQIPLWVSPKRGHELLNHLSYHLARILAPRATLHGVFMEIYSIGVLITGEAGSGKSELALELLSRGHRLVADDAPEFTQIAPDVLDGTCPEILQDLLEVRGLGVLNVRHMFGDTAIKKNKYLRLIVHLTKPITEPTPSGYERLTGDSGTRHVLDLDVPLITLPVMPGRNLAVLTEAATRLHILRTKGIDPATMFIARHSNLLERRPP</sequence>
<proteinExistence type="inferred from homology"/>
<reference key="1">
    <citation type="journal article" date="2010" name="J. Bacteriol.">
        <title>Whole genome sequences of two Xylella fastidiosa strains (M12 and M23) causing almond leaf scorch disease in California.</title>
        <authorList>
            <person name="Chen J."/>
            <person name="Xie G."/>
            <person name="Han S."/>
            <person name="Chertkov O."/>
            <person name="Sims D."/>
            <person name="Civerolo E.L."/>
        </authorList>
    </citation>
    <scope>NUCLEOTIDE SEQUENCE [LARGE SCALE GENOMIC DNA]</scope>
    <source>
        <strain>M12</strain>
    </source>
</reference>
<organism>
    <name type="scientific">Xylella fastidiosa (strain M12)</name>
    <dbReference type="NCBI Taxonomy" id="405440"/>
    <lineage>
        <taxon>Bacteria</taxon>
        <taxon>Pseudomonadati</taxon>
        <taxon>Pseudomonadota</taxon>
        <taxon>Gammaproteobacteria</taxon>
        <taxon>Lysobacterales</taxon>
        <taxon>Lysobacteraceae</taxon>
        <taxon>Xylella</taxon>
    </lineage>
</organism>
<gene>
    <name evidence="1" type="primary">hprK</name>
    <name type="ordered locus">Xfasm12_0754</name>
</gene>
<name>HPRK_XYLFM</name>
<evidence type="ECO:0000255" key="1">
    <source>
        <dbReference type="HAMAP-Rule" id="MF_01249"/>
    </source>
</evidence>